<organism>
    <name type="scientific">Methylobacterium radiotolerans (strain ATCC 27329 / DSM 1819 / JCM 2831 / NBRC 15690 / NCIMB 10815 / 0-1)</name>
    <dbReference type="NCBI Taxonomy" id="426355"/>
    <lineage>
        <taxon>Bacteria</taxon>
        <taxon>Pseudomonadati</taxon>
        <taxon>Pseudomonadota</taxon>
        <taxon>Alphaproteobacteria</taxon>
        <taxon>Hyphomicrobiales</taxon>
        <taxon>Methylobacteriaceae</taxon>
        <taxon>Methylobacterium</taxon>
    </lineage>
</organism>
<proteinExistence type="inferred from homology"/>
<protein>
    <recommendedName>
        <fullName evidence="1">3-dehydroquinate dehydratase</fullName>
        <shortName evidence="1">3-dehydroquinase</shortName>
        <ecNumber evidence="1">4.2.1.10</ecNumber>
    </recommendedName>
    <alternativeName>
        <fullName evidence="1">Type II DHQase</fullName>
    </alternativeName>
</protein>
<name>AROQ_METRJ</name>
<keyword id="KW-0028">Amino-acid biosynthesis</keyword>
<keyword id="KW-0057">Aromatic amino acid biosynthesis</keyword>
<keyword id="KW-0456">Lyase</keyword>
<comment type="function">
    <text evidence="1">Catalyzes a trans-dehydration via an enolate intermediate.</text>
</comment>
<comment type="catalytic activity">
    <reaction evidence="1">
        <text>3-dehydroquinate = 3-dehydroshikimate + H2O</text>
        <dbReference type="Rhea" id="RHEA:21096"/>
        <dbReference type="ChEBI" id="CHEBI:15377"/>
        <dbReference type="ChEBI" id="CHEBI:16630"/>
        <dbReference type="ChEBI" id="CHEBI:32364"/>
        <dbReference type="EC" id="4.2.1.10"/>
    </reaction>
</comment>
<comment type="pathway">
    <text evidence="1">Metabolic intermediate biosynthesis; chorismate biosynthesis; chorismate from D-erythrose 4-phosphate and phosphoenolpyruvate: step 3/7.</text>
</comment>
<comment type="subunit">
    <text evidence="1">Homododecamer.</text>
</comment>
<comment type="similarity">
    <text evidence="1">Belongs to the type-II 3-dehydroquinase family.</text>
</comment>
<gene>
    <name evidence="1" type="primary">aroQ</name>
    <name type="ordered locus">Mrad2831_5319</name>
</gene>
<accession>B1LXE5</accession>
<evidence type="ECO:0000255" key="1">
    <source>
        <dbReference type="HAMAP-Rule" id="MF_00169"/>
    </source>
</evidence>
<dbReference type="EC" id="4.2.1.10" evidence="1"/>
<dbReference type="EMBL" id="CP001001">
    <property type="protein sequence ID" value="ACB27266.1"/>
    <property type="molecule type" value="Genomic_DNA"/>
</dbReference>
<dbReference type="RefSeq" id="WP_012322210.1">
    <property type="nucleotide sequence ID" value="NC_010505.1"/>
</dbReference>
<dbReference type="SMR" id="B1LXE5"/>
<dbReference type="STRING" id="426355.Mrad2831_5319"/>
<dbReference type="GeneID" id="6141391"/>
<dbReference type="KEGG" id="mrd:Mrad2831_5319"/>
<dbReference type="eggNOG" id="COG0757">
    <property type="taxonomic scope" value="Bacteria"/>
</dbReference>
<dbReference type="HOGENOM" id="CLU_090968_2_0_5"/>
<dbReference type="OrthoDB" id="9790793at2"/>
<dbReference type="UniPathway" id="UPA00053">
    <property type="reaction ID" value="UER00086"/>
</dbReference>
<dbReference type="Proteomes" id="UP000006589">
    <property type="component" value="Chromosome"/>
</dbReference>
<dbReference type="GO" id="GO:0003855">
    <property type="term" value="F:3-dehydroquinate dehydratase activity"/>
    <property type="evidence" value="ECO:0007669"/>
    <property type="project" value="UniProtKB-UniRule"/>
</dbReference>
<dbReference type="GO" id="GO:0008652">
    <property type="term" value="P:amino acid biosynthetic process"/>
    <property type="evidence" value="ECO:0007669"/>
    <property type="project" value="UniProtKB-KW"/>
</dbReference>
<dbReference type="GO" id="GO:0009073">
    <property type="term" value="P:aromatic amino acid family biosynthetic process"/>
    <property type="evidence" value="ECO:0007669"/>
    <property type="project" value="UniProtKB-KW"/>
</dbReference>
<dbReference type="GO" id="GO:0009423">
    <property type="term" value="P:chorismate biosynthetic process"/>
    <property type="evidence" value="ECO:0007669"/>
    <property type="project" value="UniProtKB-UniRule"/>
</dbReference>
<dbReference type="GO" id="GO:0019631">
    <property type="term" value="P:quinate catabolic process"/>
    <property type="evidence" value="ECO:0007669"/>
    <property type="project" value="TreeGrafter"/>
</dbReference>
<dbReference type="CDD" id="cd00466">
    <property type="entry name" value="DHQase_II"/>
    <property type="match status" value="1"/>
</dbReference>
<dbReference type="Gene3D" id="3.40.50.9100">
    <property type="entry name" value="Dehydroquinase, class II"/>
    <property type="match status" value="1"/>
</dbReference>
<dbReference type="HAMAP" id="MF_00169">
    <property type="entry name" value="AroQ"/>
    <property type="match status" value="1"/>
</dbReference>
<dbReference type="InterPro" id="IPR001874">
    <property type="entry name" value="DHquinase_II"/>
</dbReference>
<dbReference type="InterPro" id="IPR018509">
    <property type="entry name" value="DHquinase_II_CS"/>
</dbReference>
<dbReference type="InterPro" id="IPR036441">
    <property type="entry name" value="DHquinase_II_sf"/>
</dbReference>
<dbReference type="NCBIfam" id="TIGR01088">
    <property type="entry name" value="aroQ"/>
    <property type="match status" value="1"/>
</dbReference>
<dbReference type="NCBIfam" id="NF003805">
    <property type="entry name" value="PRK05395.1-2"/>
    <property type="match status" value="1"/>
</dbReference>
<dbReference type="NCBIfam" id="NF003806">
    <property type="entry name" value="PRK05395.1-3"/>
    <property type="match status" value="1"/>
</dbReference>
<dbReference type="NCBIfam" id="NF003807">
    <property type="entry name" value="PRK05395.1-4"/>
    <property type="match status" value="1"/>
</dbReference>
<dbReference type="PANTHER" id="PTHR21272">
    <property type="entry name" value="CATABOLIC 3-DEHYDROQUINASE"/>
    <property type="match status" value="1"/>
</dbReference>
<dbReference type="PANTHER" id="PTHR21272:SF3">
    <property type="entry name" value="CATABOLIC 3-DEHYDROQUINASE"/>
    <property type="match status" value="1"/>
</dbReference>
<dbReference type="Pfam" id="PF01220">
    <property type="entry name" value="DHquinase_II"/>
    <property type="match status" value="1"/>
</dbReference>
<dbReference type="PIRSF" id="PIRSF001399">
    <property type="entry name" value="DHquinase_II"/>
    <property type="match status" value="1"/>
</dbReference>
<dbReference type="SUPFAM" id="SSF52304">
    <property type="entry name" value="Type II 3-dehydroquinate dehydratase"/>
    <property type="match status" value="1"/>
</dbReference>
<dbReference type="PROSITE" id="PS01029">
    <property type="entry name" value="DEHYDROQUINASE_II"/>
    <property type="match status" value="1"/>
</dbReference>
<sequence>MNDTVLVLNGPNLNLLGKRQPEIYGRETLADVEALCRETAAGFGLAVDFRQSNAEHALIDAIHEFRVGSAGIVINAGAYTHTSVALLDALNTCEVPVIECHISNVHRREAFRHHSYISLAATSVLAGFGTHGYALAIRHLAHLRAGRPA</sequence>
<feature type="chain" id="PRO_1000097608" description="3-dehydroquinate dehydratase">
    <location>
        <begin position="1"/>
        <end position="149"/>
    </location>
</feature>
<feature type="active site" description="Proton acceptor" evidence="1">
    <location>
        <position position="24"/>
    </location>
</feature>
<feature type="active site" description="Proton donor" evidence="1">
    <location>
        <position position="101"/>
    </location>
</feature>
<feature type="binding site" evidence="1">
    <location>
        <position position="75"/>
    </location>
    <ligand>
        <name>substrate</name>
    </ligand>
</feature>
<feature type="binding site" evidence="1">
    <location>
        <position position="81"/>
    </location>
    <ligand>
        <name>substrate</name>
    </ligand>
</feature>
<feature type="binding site" evidence="1">
    <location>
        <position position="88"/>
    </location>
    <ligand>
        <name>substrate</name>
    </ligand>
</feature>
<feature type="binding site" evidence="1">
    <location>
        <begin position="102"/>
        <end position="103"/>
    </location>
    <ligand>
        <name>substrate</name>
    </ligand>
</feature>
<feature type="binding site" evidence="1">
    <location>
        <position position="112"/>
    </location>
    <ligand>
        <name>substrate</name>
    </ligand>
</feature>
<feature type="site" description="Transition state stabilizer" evidence="1">
    <location>
        <position position="19"/>
    </location>
</feature>
<reference key="1">
    <citation type="submission" date="2008-03" db="EMBL/GenBank/DDBJ databases">
        <title>Complete sequence of chromosome of Methylobacterium radiotolerans JCM 2831.</title>
        <authorList>
            <consortium name="US DOE Joint Genome Institute"/>
            <person name="Copeland A."/>
            <person name="Lucas S."/>
            <person name="Lapidus A."/>
            <person name="Glavina del Rio T."/>
            <person name="Dalin E."/>
            <person name="Tice H."/>
            <person name="Bruce D."/>
            <person name="Goodwin L."/>
            <person name="Pitluck S."/>
            <person name="Kiss H."/>
            <person name="Brettin T."/>
            <person name="Detter J.C."/>
            <person name="Han C."/>
            <person name="Kuske C.R."/>
            <person name="Schmutz J."/>
            <person name="Larimer F."/>
            <person name="Land M."/>
            <person name="Hauser L."/>
            <person name="Kyrpides N."/>
            <person name="Mikhailova N."/>
            <person name="Marx C.J."/>
            <person name="Richardson P."/>
        </authorList>
    </citation>
    <scope>NUCLEOTIDE SEQUENCE [LARGE SCALE GENOMIC DNA]</scope>
    <source>
        <strain>ATCC 27329 / DSM 1819 / JCM 2831 / NBRC 15690 / NCIMB 10815 / 0-1</strain>
    </source>
</reference>